<accession>Q552L5</accession>
<comment type="function">
    <text evidence="1">May act as component of the THO subcomplex of the TREX complex which is thought to couple mRNA transcription, processing and nuclear export, and which specifically associates with spliced mRNA and not with unspliced pre-mRNA.</text>
</comment>
<comment type="subunit">
    <text evidence="1">Component of the THO subcomplex of the transcription/export (TREX) complex which seems to have a dynamic structure involving ATP-dependent remodeling.</text>
</comment>
<comment type="subcellular location">
    <subcellularLocation>
        <location evidence="1">Cytoplasm</location>
    </subcellularLocation>
    <subcellularLocation>
        <location evidence="1">Nucleus</location>
    </subcellularLocation>
    <subcellularLocation>
        <location evidence="1">Nucleus speckle</location>
    </subcellularLocation>
</comment>
<comment type="similarity">
    <text evidence="4">Belongs to the THOC7 family.</text>
</comment>
<organism>
    <name type="scientific">Dictyostelium discoideum</name>
    <name type="common">Social amoeba</name>
    <dbReference type="NCBI Taxonomy" id="44689"/>
    <lineage>
        <taxon>Eukaryota</taxon>
        <taxon>Amoebozoa</taxon>
        <taxon>Evosea</taxon>
        <taxon>Eumycetozoa</taxon>
        <taxon>Dictyostelia</taxon>
        <taxon>Dictyosteliales</taxon>
        <taxon>Dictyosteliaceae</taxon>
        <taxon>Dictyostelium</taxon>
    </lineage>
</organism>
<proteinExistence type="inferred from homology"/>
<gene>
    <name type="primary">thoc7</name>
    <name type="ORF">DDB_G0275979</name>
</gene>
<keyword id="KW-0175">Coiled coil</keyword>
<keyword id="KW-0963">Cytoplasm</keyword>
<keyword id="KW-0539">Nucleus</keyword>
<keyword id="KW-1185">Reference proteome</keyword>
<feature type="chain" id="PRO_0000349101" description="THO complex subunit 7 homolog">
    <location>
        <begin position="1"/>
        <end position="215"/>
    </location>
</feature>
<feature type="region of interest" description="Disordered" evidence="3">
    <location>
        <begin position="193"/>
        <end position="215"/>
    </location>
</feature>
<feature type="coiled-coil region" evidence="2">
    <location>
        <begin position="88"/>
        <end position="191"/>
    </location>
</feature>
<feature type="compositionally biased region" description="Low complexity" evidence="3">
    <location>
        <begin position="196"/>
        <end position="215"/>
    </location>
</feature>
<reference key="1">
    <citation type="journal article" date="2002" name="Nature">
        <title>Sequence and analysis of chromosome 2 of Dictyostelium discoideum.</title>
        <authorList>
            <person name="Gloeckner G."/>
            <person name="Eichinger L."/>
            <person name="Szafranski K."/>
            <person name="Pachebat J.A."/>
            <person name="Bankier A.T."/>
            <person name="Dear P.H."/>
            <person name="Lehmann R."/>
            <person name="Baumgart C."/>
            <person name="Parra G."/>
            <person name="Abril J.F."/>
            <person name="Guigo R."/>
            <person name="Kumpf K."/>
            <person name="Tunggal B."/>
            <person name="Cox E.C."/>
            <person name="Quail M.A."/>
            <person name="Platzer M."/>
            <person name="Rosenthal A."/>
            <person name="Noegel A.A."/>
        </authorList>
    </citation>
    <scope>NUCLEOTIDE SEQUENCE [LARGE SCALE GENOMIC DNA]</scope>
    <source>
        <strain>AX4</strain>
    </source>
</reference>
<reference key="2">
    <citation type="journal article" date="2005" name="Nature">
        <title>The genome of the social amoeba Dictyostelium discoideum.</title>
        <authorList>
            <person name="Eichinger L."/>
            <person name="Pachebat J.A."/>
            <person name="Gloeckner G."/>
            <person name="Rajandream M.A."/>
            <person name="Sucgang R."/>
            <person name="Berriman M."/>
            <person name="Song J."/>
            <person name="Olsen R."/>
            <person name="Szafranski K."/>
            <person name="Xu Q."/>
            <person name="Tunggal B."/>
            <person name="Kummerfeld S."/>
            <person name="Madera M."/>
            <person name="Konfortov B.A."/>
            <person name="Rivero F."/>
            <person name="Bankier A.T."/>
            <person name="Lehmann R."/>
            <person name="Hamlin N."/>
            <person name="Davies R."/>
            <person name="Gaudet P."/>
            <person name="Fey P."/>
            <person name="Pilcher K."/>
            <person name="Chen G."/>
            <person name="Saunders D."/>
            <person name="Sodergren E.J."/>
            <person name="Davis P."/>
            <person name="Kerhornou A."/>
            <person name="Nie X."/>
            <person name="Hall N."/>
            <person name="Anjard C."/>
            <person name="Hemphill L."/>
            <person name="Bason N."/>
            <person name="Farbrother P."/>
            <person name="Desany B."/>
            <person name="Just E."/>
            <person name="Morio T."/>
            <person name="Rost R."/>
            <person name="Churcher C.M."/>
            <person name="Cooper J."/>
            <person name="Haydock S."/>
            <person name="van Driessche N."/>
            <person name="Cronin A."/>
            <person name="Goodhead I."/>
            <person name="Muzny D.M."/>
            <person name="Mourier T."/>
            <person name="Pain A."/>
            <person name="Lu M."/>
            <person name="Harper D."/>
            <person name="Lindsay R."/>
            <person name="Hauser H."/>
            <person name="James K.D."/>
            <person name="Quiles M."/>
            <person name="Madan Babu M."/>
            <person name="Saito T."/>
            <person name="Buchrieser C."/>
            <person name="Wardroper A."/>
            <person name="Felder M."/>
            <person name="Thangavelu M."/>
            <person name="Johnson D."/>
            <person name="Knights A."/>
            <person name="Loulseged H."/>
            <person name="Mungall K.L."/>
            <person name="Oliver K."/>
            <person name="Price C."/>
            <person name="Quail M.A."/>
            <person name="Urushihara H."/>
            <person name="Hernandez J."/>
            <person name="Rabbinowitsch E."/>
            <person name="Steffen D."/>
            <person name="Sanders M."/>
            <person name="Ma J."/>
            <person name="Kohara Y."/>
            <person name="Sharp S."/>
            <person name="Simmonds M.N."/>
            <person name="Spiegler S."/>
            <person name="Tivey A."/>
            <person name="Sugano S."/>
            <person name="White B."/>
            <person name="Walker D."/>
            <person name="Woodward J.R."/>
            <person name="Winckler T."/>
            <person name="Tanaka Y."/>
            <person name="Shaulsky G."/>
            <person name="Schleicher M."/>
            <person name="Weinstock G.M."/>
            <person name="Rosenthal A."/>
            <person name="Cox E.C."/>
            <person name="Chisholm R.L."/>
            <person name="Gibbs R.A."/>
            <person name="Loomis W.F."/>
            <person name="Platzer M."/>
            <person name="Kay R.R."/>
            <person name="Williams J.G."/>
            <person name="Dear P.H."/>
            <person name="Noegel A.A."/>
            <person name="Barrell B.G."/>
            <person name="Kuspa A."/>
        </authorList>
    </citation>
    <scope>NUCLEOTIDE SEQUENCE [LARGE SCALE GENOMIC DNA]</scope>
    <source>
        <strain>AX4</strain>
    </source>
</reference>
<dbReference type="EMBL" id="AAFI02000013">
    <property type="protein sequence ID" value="EAL69446.1"/>
    <property type="molecule type" value="Genomic_DNA"/>
</dbReference>
<dbReference type="RefSeq" id="XP_643367.1">
    <property type="nucleotide sequence ID" value="XM_638275.1"/>
</dbReference>
<dbReference type="SMR" id="Q552L5"/>
<dbReference type="FunCoup" id="Q552L5">
    <property type="interactions" value="56"/>
</dbReference>
<dbReference type="STRING" id="44689.Q552L5"/>
<dbReference type="PaxDb" id="44689-DDB0233570"/>
<dbReference type="EnsemblProtists" id="EAL69446">
    <property type="protein sequence ID" value="EAL69446"/>
    <property type="gene ID" value="DDB_G0275979"/>
</dbReference>
<dbReference type="GeneID" id="8620250"/>
<dbReference type="KEGG" id="ddi:DDB_G0275979"/>
<dbReference type="dictyBase" id="DDB_G0275979">
    <property type="gene designation" value="thoc7"/>
</dbReference>
<dbReference type="VEuPathDB" id="AmoebaDB:DDB_G0275979"/>
<dbReference type="eggNOG" id="KOG3215">
    <property type="taxonomic scope" value="Eukaryota"/>
</dbReference>
<dbReference type="HOGENOM" id="CLU_1285362_0_0_1"/>
<dbReference type="InParanoid" id="Q552L5"/>
<dbReference type="OMA" id="WANSKND"/>
<dbReference type="PhylomeDB" id="Q552L5"/>
<dbReference type="PRO" id="PR:Q552L5"/>
<dbReference type="Proteomes" id="UP000002195">
    <property type="component" value="Chromosome 2"/>
</dbReference>
<dbReference type="GO" id="GO:0005737">
    <property type="term" value="C:cytoplasm"/>
    <property type="evidence" value="ECO:0007669"/>
    <property type="project" value="UniProtKB-SubCell"/>
</dbReference>
<dbReference type="GO" id="GO:0016607">
    <property type="term" value="C:nuclear speck"/>
    <property type="evidence" value="ECO:0007669"/>
    <property type="project" value="UniProtKB-SubCell"/>
</dbReference>
<dbReference type="GO" id="GO:0000445">
    <property type="term" value="C:THO complex part of transcription export complex"/>
    <property type="evidence" value="ECO:0000318"/>
    <property type="project" value="GO_Central"/>
</dbReference>
<dbReference type="GO" id="GO:0006406">
    <property type="term" value="P:mRNA export from nucleus"/>
    <property type="evidence" value="ECO:0000318"/>
    <property type="project" value="GO_Central"/>
</dbReference>
<dbReference type="GO" id="GO:0006397">
    <property type="term" value="P:mRNA processing"/>
    <property type="evidence" value="ECO:0007669"/>
    <property type="project" value="InterPro"/>
</dbReference>
<dbReference type="InterPro" id="IPR008501">
    <property type="entry name" value="THOC7/Mft1"/>
</dbReference>
<dbReference type="Pfam" id="PF05615">
    <property type="entry name" value="THOC7"/>
    <property type="match status" value="1"/>
</dbReference>
<evidence type="ECO:0000250" key="1">
    <source>
        <dbReference type="UniProtKB" id="Q6I9Y2"/>
    </source>
</evidence>
<evidence type="ECO:0000255" key="2"/>
<evidence type="ECO:0000256" key="3">
    <source>
        <dbReference type="SAM" id="MobiDB-lite"/>
    </source>
</evidence>
<evidence type="ECO:0000305" key="4"/>
<name>THOC7_DICDI</name>
<protein>
    <recommendedName>
        <fullName>THO complex subunit 7 homolog</fullName>
    </recommendedName>
</protein>
<sequence length="215" mass="25304">MKLIKKLLEDEEDSFFKNKIVFKNFVIKKVFKKYLQFINVTTGNNENSSVDLQSLCTQLINEFGHLELSVQKAQTISETCTDETLYYQQLSKQREIEIENEKKEIAILKETLDYEKKQRQYKEQYLALYKAINEKPSTEQTEKEIEKAQKELNEITDQTNKTTSKLELRTKQFQLLLHTLNELEKNLDESIPFIENSNNNNNNSNSDQSNTPMES</sequence>